<sequence>MEIVAENRKARFDYFVLQEYDAGMVLVGSEVKSLRQRKVNMGDAYVLEKDMELWIHNLHISEYNRSDRKNHKPLRVRKLLLRKREIHKIAGNIKVSGLAVVPLMIFFNNKGIAKIKIAIVKGKKLYDKREAIKTRDWQREKSRISRREV</sequence>
<reference key="1">
    <citation type="journal article" date="2009" name="BMC Genomics">
        <title>Conservation in the face of diversity: multistrain analysis of an intracellular bacterium.</title>
        <authorList>
            <person name="Dark M.J."/>
            <person name="Herndon D.R."/>
            <person name="Kappmeyer L.S."/>
            <person name="Gonzales M.P."/>
            <person name="Nordeen E."/>
            <person name="Palmer G.H."/>
            <person name="Knowles D.P. Jr."/>
            <person name="Brayton K.A."/>
        </authorList>
    </citation>
    <scope>NUCLEOTIDE SEQUENCE [LARGE SCALE GENOMIC DNA]</scope>
    <source>
        <strain>Florida</strain>
    </source>
</reference>
<protein>
    <recommendedName>
        <fullName evidence="1">SsrA-binding protein</fullName>
    </recommendedName>
    <alternativeName>
        <fullName evidence="1">Small protein B</fullName>
    </alternativeName>
</protein>
<evidence type="ECO:0000255" key="1">
    <source>
        <dbReference type="HAMAP-Rule" id="MF_00023"/>
    </source>
</evidence>
<proteinExistence type="inferred from homology"/>
<feature type="chain" id="PRO_1000197602" description="SsrA-binding protein">
    <location>
        <begin position="1"/>
        <end position="149"/>
    </location>
</feature>
<dbReference type="EMBL" id="CP001079">
    <property type="protein sequence ID" value="ACM49710.1"/>
    <property type="molecule type" value="Genomic_DNA"/>
</dbReference>
<dbReference type="RefSeq" id="WP_010266209.1">
    <property type="nucleotide sequence ID" value="NZ_AFMS01000080.1"/>
</dbReference>
<dbReference type="SMR" id="B9KH06"/>
<dbReference type="STRING" id="320483.AMF_884"/>
<dbReference type="GeneID" id="7398732"/>
<dbReference type="KEGG" id="amf:AMF_884"/>
<dbReference type="PATRIC" id="fig|320483.3.peg.1016"/>
<dbReference type="eggNOG" id="COG0691">
    <property type="taxonomic scope" value="Bacteria"/>
</dbReference>
<dbReference type="HOGENOM" id="CLU_108953_0_0_5"/>
<dbReference type="Proteomes" id="UP000007307">
    <property type="component" value="Chromosome"/>
</dbReference>
<dbReference type="GO" id="GO:0005829">
    <property type="term" value="C:cytosol"/>
    <property type="evidence" value="ECO:0007669"/>
    <property type="project" value="TreeGrafter"/>
</dbReference>
<dbReference type="GO" id="GO:0003723">
    <property type="term" value="F:RNA binding"/>
    <property type="evidence" value="ECO:0007669"/>
    <property type="project" value="UniProtKB-UniRule"/>
</dbReference>
<dbReference type="GO" id="GO:0070929">
    <property type="term" value="P:trans-translation"/>
    <property type="evidence" value="ECO:0007669"/>
    <property type="project" value="UniProtKB-UniRule"/>
</dbReference>
<dbReference type="CDD" id="cd09294">
    <property type="entry name" value="SmpB"/>
    <property type="match status" value="1"/>
</dbReference>
<dbReference type="Gene3D" id="2.40.280.10">
    <property type="match status" value="1"/>
</dbReference>
<dbReference type="HAMAP" id="MF_00023">
    <property type="entry name" value="SmpB"/>
    <property type="match status" value="1"/>
</dbReference>
<dbReference type="InterPro" id="IPR023620">
    <property type="entry name" value="SmpB"/>
</dbReference>
<dbReference type="InterPro" id="IPR000037">
    <property type="entry name" value="SsrA-bd_prot"/>
</dbReference>
<dbReference type="InterPro" id="IPR020081">
    <property type="entry name" value="SsrA-bd_prot_CS"/>
</dbReference>
<dbReference type="NCBIfam" id="NF003843">
    <property type="entry name" value="PRK05422.1"/>
    <property type="match status" value="1"/>
</dbReference>
<dbReference type="NCBIfam" id="TIGR00086">
    <property type="entry name" value="smpB"/>
    <property type="match status" value="1"/>
</dbReference>
<dbReference type="PANTHER" id="PTHR30308:SF2">
    <property type="entry name" value="SSRA-BINDING PROTEIN"/>
    <property type="match status" value="1"/>
</dbReference>
<dbReference type="PANTHER" id="PTHR30308">
    <property type="entry name" value="TMRNA-BINDING COMPONENT OF TRANS-TRANSLATION TAGGING COMPLEX"/>
    <property type="match status" value="1"/>
</dbReference>
<dbReference type="Pfam" id="PF01668">
    <property type="entry name" value="SmpB"/>
    <property type="match status" value="1"/>
</dbReference>
<dbReference type="SUPFAM" id="SSF74982">
    <property type="entry name" value="Small protein B (SmpB)"/>
    <property type="match status" value="1"/>
</dbReference>
<dbReference type="PROSITE" id="PS01317">
    <property type="entry name" value="SSRP"/>
    <property type="match status" value="1"/>
</dbReference>
<keyword id="KW-0963">Cytoplasm</keyword>
<keyword id="KW-1185">Reference proteome</keyword>
<keyword id="KW-0694">RNA-binding</keyword>
<gene>
    <name evidence="1" type="primary">smpB</name>
    <name type="ordered locus">AMF_884</name>
</gene>
<comment type="function">
    <text evidence="1">Required for rescue of stalled ribosomes mediated by trans-translation. Binds to transfer-messenger RNA (tmRNA), required for stable association of tmRNA with ribosomes. tmRNA and SmpB together mimic tRNA shape, replacing the anticodon stem-loop with SmpB. tmRNA is encoded by the ssrA gene; the 2 termini fold to resemble tRNA(Ala) and it encodes a 'tag peptide', a short internal open reading frame. During trans-translation Ala-aminoacylated tmRNA acts like a tRNA, entering the A-site of stalled ribosomes, displacing the stalled mRNA. The ribosome then switches to translate the ORF on the tmRNA; the nascent peptide is terminated with the 'tag peptide' encoded by the tmRNA and targeted for degradation. The ribosome is freed to recommence translation, which seems to be the essential function of trans-translation.</text>
</comment>
<comment type="subcellular location">
    <subcellularLocation>
        <location evidence="1">Cytoplasm</location>
    </subcellularLocation>
    <text evidence="1">The tmRNA-SmpB complex associates with stalled 70S ribosomes.</text>
</comment>
<comment type="similarity">
    <text evidence="1">Belongs to the SmpB family.</text>
</comment>
<accession>B9KH06</accession>
<name>SSRP_ANAMF</name>
<organism>
    <name type="scientific">Anaplasma marginale (strain Florida)</name>
    <dbReference type="NCBI Taxonomy" id="320483"/>
    <lineage>
        <taxon>Bacteria</taxon>
        <taxon>Pseudomonadati</taxon>
        <taxon>Pseudomonadota</taxon>
        <taxon>Alphaproteobacteria</taxon>
        <taxon>Rickettsiales</taxon>
        <taxon>Anaplasmataceae</taxon>
        <taxon>Anaplasma</taxon>
    </lineage>
</organism>